<organism>
    <name type="scientific">Citrus sinensis</name>
    <name type="common">Sweet orange</name>
    <name type="synonym">Citrus aurantium var. sinensis</name>
    <dbReference type="NCBI Taxonomy" id="2711"/>
    <lineage>
        <taxon>Eukaryota</taxon>
        <taxon>Viridiplantae</taxon>
        <taxon>Streptophyta</taxon>
        <taxon>Embryophyta</taxon>
        <taxon>Tracheophyta</taxon>
        <taxon>Spermatophyta</taxon>
        <taxon>Magnoliopsida</taxon>
        <taxon>eudicotyledons</taxon>
        <taxon>Gunneridae</taxon>
        <taxon>Pentapetalae</taxon>
        <taxon>rosids</taxon>
        <taxon>malvids</taxon>
        <taxon>Sapindales</taxon>
        <taxon>Rutaceae</taxon>
        <taxon>Aurantioideae</taxon>
        <taxon>Citrus</taxon>
    </lineage>
</organism>
<comment type="function">
    <text evidence="1">Binds 16S rRNA, required for the assembly of 30S particles.</text>
</comment>
<comment type="subunit">
    <text evidence="1">Part of the 30S ribosomal subunit.</text>
</comment>
<comment type="subcellular location">
    <subcellularLocation>
        <location>Plastid</location>
        <location>Chloroplast</location>
    </subcellularLocation>
</comment>
<comment type="similarity">
    <text evidence="1">Belongs to the universal ribosomal protein uS14 family.</text>
</comment>
<keyword id="KW-0150">Chloroplast</keyword>
<keyword id="KW-0934">Plastid</keyword>
<keyword id="KW-0687">Ribonucleoprotein</keyword>
<keyword id="KW-0689">Ribosomal protein</keyword>
<keyword id="KW-0694">RNA-binding</keyword>
<keyword id="KW-0699">rRNA-binding</keyword>
<protein>
    <recommendedName>
        <fullName evidence="1">Small ribosomal subunit protein uS14c</fullName>
    </recommendedName>
    <alternativeName>
        <fullName evidence="2">30S ribosomal protein S14, chloroplastic</fullName>
    </alternativeName>
</protein>
<reference key="1">
    <citation type="journal article" date="2006" name="BMC Plant Biol.">
        <title>The complete chloroplast genome sequence of Citrus sinensis (L.) Osbeck var 'Ridge Pineapple': organization and phylogenetic relationships to other angiosperms.</title>
        <authorList>
            <person name="Bausher M.G."/>
            <person name="Singh N.D."/>
            <person name="Lee S.-B."/>
            <person name="Jansen R.K."/>
            <person name="Daniell H."/>
        </authorList>
    </citation>
    <scope>NUCLEOTIDE SEQUENCE [LARGE SCALE GENOMIC DNA]</scope>
    <source>
        <strain>cv. Osbeck var. Ridge Pineapple</strain>
    </source>
</reference>
<accession>Q09MI0</accession>
<geneLocation type="chloroplast"/>
<gene>
    <name evidence="1" type="primary">rps14</name>
</gene>
<evidence type="ECO:0000255" key="1">
    <source>
        <dbReference type="HAMAP-Rule" id="MF_00537"/>
    </source>
</evidence>
<evidence type="ECO:0000305" key="2"/>
<proteinExistence type="inferred from homology"/>
<feature type="chain" id="PRO_0000276671" description="Small ribosomal subunit protein uS14c">
    <location>
        <begin position="1"/>
        <end position="100"/>
    </location>
</feature>
<name>RR14_CITSI</name>
<sequence length="100" mass="11741">MARQSLIQREKKRHKLEQKYHLIRRSSKKEINKAPSLSDKWKIHGKLQSSPRNSAPTRLHRRCFLTGRPRANYRDFGLSGHILREMVHACLLPGATRSSW</sequence>
<dbReference type="EMBL" id="DQ864733">
    <property type="protein sequence ID" value="ABI49018.1"/>
    <property type="molecule type" value="Genomic_DNA"/>
</dbReference>
<dbReference type="RefSeq" id="YP_740473.1">
    <property type="nucleotide sequence ID" value="NC_008334.1"/>
</dbReference>
<dbReference type="SMR" id="Q09MI0"/>
<dbReference type="GeneID" id="4271206"/>
<dbReference type="KEGG" id="cit:4271206"/>
<dbReference type="OrthoDB" id="133660at71240"/>
<dbReference type="GO" id="GO:0009507">
    <property type="term" value="C:chloroplast"/>
    <property type="evidence" value="ECO:0007669"/>
    <property type="project" value="UniProtKB-SubCell"/>
</dbReference>
<dbReference type="GO" id="GO:1990904">
    <property type="term" value="C:ribonucleoprotein complex"/>
    <property type="evidence" value="ECO:0007669"/>
    <property type="project" value="UniProtKB-KW"/>
</dbReference>
<dbReference type="GO" id="GO:0005840">
    <property type="term" value="C:ribosome"/>
    <property type="evidence" value="ECO:0007669"/>
    <property type="project" value="UniProtKB-KW"/>
</dbReference>
<dbReference type="GO" id="GO:0019843">
    <property type="term" value="F:rRNA binding"/>
    <property type="evidence" value="ECO:0007669"/>
    <property type="project" value="UniProtKB-UniRule"/>
</dbReference>
<dbReference type="GO" id="GO:0003735">
    <property type="term" value="F:structural constituent of ribosome"/>
    <property type="evidence" value="ECO:0007669"/>
    <property type="project" value="InterPro"/>
</dbReference>
<dbReference type="GO" id="GO:0006412">
    <property type="term" value="P:translation"/>
    <property type="evidence" value="ECO:0007669"/>
    <property type="project" value="UniProtKB-UniRule"/>
</dbReference>
<dbReference type="FunFam" id="1.10.287.1480:FF:000001">
    <property type="entry name" value="30S ribosomal protein S14"/>
    <property type="match status" value="1"/>
</dbReference>
<dbReference type="Gene3D" id="1.10.287.1480">
    <property type="match status" value="1"/>
</dbReference>
<dbReference type="HAMAP" id="MF_00537">
    <property type="entry name" value="Ribosomal_uS14_1"/>
    <property type="match status" value="1"/>
</dbReference>
<dbReference type="InterPro" id="IPR001209">
    <property type="entry name" value="Ribosomal_uS14"/>
</dbReference>
<dbReference type="InterPro" id="IPR023036">
    <property type="entry name" value="Ribosomal_uS14_bac/plastid"/>
</dbReference>
<dbReference type="InterPro" id="IPR018271">
    <property type="entry name" value="Ribosomal_uS14_CS"/>
</dbReference>
<dbReference type="NCBIfam" id="NF006477">
    <property type="entry name" value="PRK08881.1"/>
    <property type="match status" value="1"/>
</dbReference>
<dbReference type="PANTHER" id="PTHR19836">
    <property type="entry name" value="30S RIBOSOMAL PROTEIN S14"/>
    <property type="match status" value="1"/>
</dbReference>
<dbReference type="PANTHER" id="PTHR19836:SF19">
    <property type="entry name" value="SMALL RIBOSOMAL SUBUNIT PROTEIN US14M"/>
    <property type="match status" value="1"/>
</dbReference>
<dbReference type="Pfam" id="PF00253">
    <property type="entry name" value="Ribosomal_S14"/>
    <property type="match status" value="1"/>
</dbReference>
<dbReference type="SUPFAM" id="SSF57716">
    <property type="entry name" value="Glucocorticoid receptor-like (DNA-binding domain)"/>
    <property type="match status" value="1"/>
</dbReference>
<dbReference type="PROSITE" id="PS00527">
    <property type="entry name" value="RIBOSOMAL_S14"/>
    <property type="match status" value="1"/>
</dbReference>